<protein>
    <recommendedName>
        <fullName evidence="1">Sigma factor-binding protein Crl</fullName>
    </recommendedName>
</protein>
<sequence length="133" mass="15656">MTLPSGHPKSRLIKKFTALGPYIREGKCEDNRFFFDCLAVCVNVKPAPEVREFWGWWMELEAQESRFTYSYQFGLFDKAGDWKSVPVKDTEVVERLEHTLREFHEKLRELLTTLNLKLEPADDFRDEPVKLTA</sequence>
<feature type="chain" id="PRO_1000164424" description="Sigma factor-binding protein Crl">
    <location>
        <begin position="1"/>
        <end position="133"/>
    </location>
</feature>
<feature type="region of interest" description="Essential for activity" evidence="1">
    <location>
        <begin position="99"/>
        <end position="122"/>
    </location>
</feature>
<feature type="coiled-coil region" evidence="1">
    <location>
        <begin position="90"/>
        <end position="116"/>
    </location>
</feature>
<accession>B7L3Z2</accession>
<proteinExistence type="inferred from homology"/>
<comment type="function">
    <text evidence="1">Binds to the sigma-S subunit of RNA polymerase, activating expression of sigma-S-regulated genes. Stimulates RNA polymerase holoenzyme formation and may bind to several other sigma factors, such as sigma-70 and sigma-32.</text>
</comment>
<comment type="subcellular location">
    <subcellularLocation>
        <location evidence="1">Cytoplasm</location>
    </subcellularLocation>
</comment>
<comment type="similarity">
    <text evidence="1">Belongs to the Crl family.</text>
</comment>
<organism>
    <name type="scientific">Escherichia coli (strain 55989 / EAEC)</name>
    <dbReference type="NCBI Taxonomy" id="585055"/>
    <lineage>
        <taxon>Bacteria</taxon>
        <taxon>Pseudomonadati</taxon>
        <taxon>Pseudomonadota</taxon>
        <taxon>Gammaproteobacteria</taxon>
        <taxon>Enterobacterales</taxon>
        <taxon>Enterobacteriaceae</taxon>
        <taxon>Escherichia</taxon>
    </lineage>
</organism>
<gene>
    <name evidence="1" type="primary">crl</name>
    <name type="ordered locus">EC55989_0264</name>
</gene>
<dbReference type="EMBL" id="CU928145">
    <property type="protein sequence ID" value="CAU96143.1"/>
    <property type="molecule type" value="Genomic_DNA"/>
</dbReference>
<dbReference type="RefSeq" id="WP_000174677.1">
    <property type="nucleotide sequence ID" value="NC_011748.1"/>
</dbReference>
<dbReference type="SMR" id="B7L3Z2"/>
<dbReference type="GeneID" id="93777153"/>
<dbReference type="KEGG" id="eck:EC55989_0264"/>
<dbReference type="HOGENOM" id="CLU_136773_0_0_6"/>
<dbReference type="Proteomes" id="UP000000746">
    <property type="component" value="Chromosome"/>
</dbReference>
<dbReference type="GO" id="GO:0005737">
    <property type="term" value="C:cytoplasm"/>
    <property type="evidence" value="ECO:0007669"/>
    <property type="project" value="UniProtKB-SubCell"/>
</dbReference>
<dbReference type="GO" id="GO:0045893">
    <property type="term" value="P:positive regulation of DNA-templated transcription"/>
    <property type="evidence" value="ECO:0007669"/>
    <property type="project" value="UniProtKB-UniRule"/>
</dbReference>
<dbReference type="FunFam" id="3.30.310.230:FF:000001">
    <property type="entry name" value="Sigma factor-binding protein Crl"/>
    <property type="match status" value="1"/>
</dbReference>
<dbReference type="Gene3D" id="3.30.310.230">
    <property type="entry name" value="Sigma factor-binding protein Crl monomer"/>
    <property type="match status" value="1"/>
</dbReference>
<dbReference type="HAMAP" id="MF_01178">
    <property type="entry name" value="Crl"/>
    <property type="match status" value="1"/>
</dbReference>
<dbReference type="InterPro" id="IPR009986">
    <property type="entry name" value="Tscrpt_reg_Crl"/>
</dbReference>
<dbReference type="InterPro" id="IPR038208">
    <property type="entry name" value="Tscrpt_reg_Crl_sf"/>
</dbReference>
<dbReference type="NCBIfam" id="NF008217">
    <property type="entry name" value="PRK10984.1"/>
    <property type="match status" value="1"/>
</dbReference>
<dbReference type="Pfam" id="PF07417">
    <property type="entry name" value="Crl"/>
    <property type="match status" value="1"/>
</dbReference>
<name>CRL_ECO55</name>
<evidence type="ECO:0000255" key="1">
    <source>
        <dbReference type="HAMAP-Rule" id="MF_01178"/>
    </source>
</evidence>
<reference key="1">
    <citation type="journal article" date="2009" name="PLoS Genet.">
        <title>Organised genome dynamics in the Escherichia coli species results in highly diverse adaptive paths.</title>
        <authorList>
            <person name="Touchon M."/>
            <person name="Hoede C."/>
            <person name="Tenaillon O."/>
            <person name="Barbe V."/>
            <person name="Baeriswyl S."/>
            <person name="Bidet P."/>
            <person name="Bingen E."/>
            <person name="Bonacorsi S."/>
            <person name="Bouchier C."/>
            <person name="Bouvet O."/>
            <person name="Calteau A."/>
            <person name="Chiapello H."/>
            <person name="Clermont O."/>
            <person name="Cruveiller S."/>
            <person name="Danchin A."/>
            <person name="Diard M."/>
            <person name="Dossat C."/>
            <person name="Karoui M.E."/>
            <person name="Frapy E."/>
            <person name="Garry L."/>
            <person name="Ghigo J.M."/>
            <person name="Gilles A.M."/>
            <person name="Johnson J."/>
            <person name="Le Bouguenec C."/>
            <person name="Lescat M."/>
            <person name="Mangenot S."/>
            <person name="Martinez-Jehanne V."/>
            <person name="Matic I."/>
            <person name="Nassif X."/>
            <person name="Oztas S."/>
            <person name="Petit M.A."/>
            <person name="Pichon C."/>
            <person name="Rouy Z."/>
            <person name="Ruf C.S."/>
            <person name="Schneider D."/>
            <person name="Tourret J."/>
            <person name="Vacherie B."/>
            <person name="Vallenet D."/>
            <person name="Medigue C."/>
            <person name="Rocha E.P.C."/>
            <person name="Denamur E."/>
        </authorList>
    </citation>
    <scope>NUCLEOTIDE SEQUENCE [LARGE SCALE GENOMIC DNA]</scope>
    <source>
        <strain>55989 / EAEC</strain>
    </source>
</reference>
<keyword id="KW-0010">Activator</keyword>
<keyword id="KW-0175">Coiled coil</keyword>
<keyword id="KW-0963">Cytoplasm</keyword>
<keyword id="KW-1185">Reference proteome</keyword>
<keyword id="KW-0804">Transcription</keyword>
<keyword id="KW-0805">Transcription regulation</keyword>